<keyword id="KW-0903">Direct protein sequencing</keyword>
<keyword id="KW-0520">NAD</keyword>
<keyword id="KW-0560">Oxidoreductase</keyword>
<keyword id="KW-0816">Tricarboxylic acid cycle</keyword>
<accession>P19980</accession>
<proteinExistence type="evidence at protein level"/>
<dbReference type="EC" id="1.1.1.37"/>
<dbReference type="PIR" id="S07574">
    <property type="entry name" value="S07574"/>
</dbReference>
<dbReference type="SMR" id="P19980"/>
<dbReference type="GO" id="GO:0030060">
    <property type="term" value="F:L-malate dehydrogenase (NAD+) activity"/>
    <property type="evidence" value="ECO:0007669"/>
    <property type="project" value="UniProtKB-EC"/>
</dbReference>
<dbReference type="GO" id="GO:0006099">
    <property type="term" value="P:tricarboxylic acid cycle"/>
    <property type="evidence" value="ECO:0007669"/>
    <property type="project" value="UniProtKB-KW"/>
</dbReference>
<dbReference type="Gene3D" id="3.40.50.720">
    <property type="entry name" value="NAD(P)-binding Rossmann-like Domain"/>
    <property type="match status" value="1"/>
</dbReference>
<dbReference type="InterPro" id="IPR036291">
    <property type="entry name" value="NAD(P)-bd_dom_sf"/>
</dbReference>
<dbReference type="SUPFAM" id="SSF51735">
    <property type="entry name" value="NAD(P)-binding Rossmann-fold domains"/>
    <property type="match status" value="1"/>
</dbReference>
<organism>
    <name type="scientific">Phenylobacterium immobile</name>
    <dbReference type="NCBI Taxonomy" id="21"/>
    <lineage>
        <taxon>Bacteria</taxon>
        <taxon>Pseudomonadati</taxon>
        <taxon>Pseudomonadota</taxon>
        <taxon>Alphaproteobacteria</taxon>
        <taxon>Caulobacterales</taxon>
        <taxon>Caulobacteraceae</taxon>
        <taxon>Phenylobacterium</taxon>
    </lineage>
</organism>
<sequence length="25" mass="2626">SKTPIRVAVTGAAGNIGYHLLFRIA</sequence>
<protein>
    <recommendedName>
        <fullName>Malate dehydrogenase</fullName>
        <ecNumber>1.1.1.37</ecNumber>
    </recommendedName>
</protein>
<evidence type="ECO:0000250" key="1"/>
<evidence type="ECO:0000255" key="2">
    <source>
        <dbReference type="PROSITE-ProRule" id="PRU10004"/>
    </source>
</evidence>
<evidence type="ECO:0000305" key="3"/>
<feature type="chain" id="PRO_0000113385" description="Malate dehydrogenase">
    <location>
        <begin position="1"/>
        <end position="25" status="greater than"/>
    </location>
</feature>
<feature type="binding site" evidence="1">
    <location>
        <begin position="11"/>
        <end position="17"/>
    </location>
    <ligand>
        <name>NAD(+)</name>
        <dbReference type="ChEBI" id="CHEBI:57540"/>
    </ligand>
</feature>
<feature type="non-terminal residue">
    <location>
        <position position="25"/>
    </location>
</feature>
<name>MDH_PHEIM</name>
<reference key="1">
    <citation type="journal article" date="1989" name="Biol. Chem. Hoppe-Seyler">
        <title>Purification and N-terminal amino-acid sequences of bacterial malate dehydrogenases from six actinomycetales strains and from Phenylobacterium immobile, strain E.</title>
        <authorList>
            <person name="Rommel T.O."/>
            <person name="Hund H.-K."/>
            <person name="Speth A.R."/>
            <person name="Lingens F."/>
        </authorList>
    </citation>
    <scope>PROTEIN SEQUENCE</scope>
    <source>
        <strain>E</strain>
    </source>
</reference>
<comment type="function">
    <text evidence="1">Catalyzes the reversible oxidation of malate to oxaloacetate.</text>
</comment>
<comment type="catalytic activity">
    <reaction evidence="2">
        <text>(S)-malate + NAD(+) = oxaloacetate + NADH + H(+)</text>
        <dbReference type="Rhea" id="RHEA:21432"/>
        <dbReference type="ChEBI" id="CHEBI:15378"/>
        <dbReference type="ChEBI" id="CHEBI:15589"/>
        <dbReference type="ChEBI" id="CHEBI:16452"/>
        <dbReference type="ChEBI" id="CHEBI:57540"/>
        <dbReference type="ChEBI" id="CHEBI:57945"/>
        <dbReference type="EC" id="1.1.1.37"/>
    </reaction>
</comment>
<comment type="similarity">
    <text evidence="3">Belongs to the LDH/MDH superfamily. MDH type 2 family.</text>
</comment>
<gene>
    <name type="primary">mdh</name>
</gene>